<gene>
    <name type="primary">ASIP</name>
</gene>
<sequence>MDVTXLLLATLLVFLCCFAAYSHLPPEEKLRDDRSLRSNSSVNLLDLPSVSIVALNKKSKKISRKEAENKRSSKKEASKQKVARPRTPLSVPCVSTRGSCKPPAPACCHPCASCQCRFFRSACSCRVINVNC</sequence>
<comment type="function">
    <text evidence="3">Involved in the regulation of melanogenesis. The binding of ASP to MC1R precludes alpha-MSH initiated signaling and thus blocks production of cAMP, leading to a down-regulation of eumelanogenesis (brown/black pigment) and thus increasing synthesis of pheomelanin (yellow/red pigment) (By similarity).</text>
</comment>
<comment type="subcellular location">
    <subcellularLocation>
        <location evidence="2">Secreted</location>
    </subcellularLocation>
</comment>
<comment type="domain">
    <text evidence="1">The presence of a 'disulfide through disulfide knot' structurally defines this protein as a knottin.</text>
</comment>
<reference key="1">
    <citation type="journal article" date="2006" name="Mamm. Genome">
        <title>Investigation of the role of the agouti signaling protein gene (ASIP) in coat color evolution in primates.</title>
        <authorList>
            <person name="Mundy N.I."/>
            <person name="Kelly J."/>
        </authorList>
    </citation>
    <scope>NUCLEOTIDE SEQUENCE [GENOMIC DNA]</scope>
</reference>
<dbReference type="EMBL" id="EF094499">
    <property type="protein sequence ID" value="ABL84297.1"/>
    <property type="molecule type" value="Genomic_DNA"/>
</dbReference>
<dbReference type="GlyCosmos" id="A1YL82">
    <property type="glycosylation" value="1 site, No reported glycans"/>
</dbReference>
<dbReference type="GO" id="GO:0005615">
    <property type="term" value="C:extracellular space"/>
    <property type="evidence" value="ECO:0000250"/>
    <property type="project" value="UniProtKB"/>
</dbReference>
<dbReference type="GO" id="GO:0031779">
    <property type="term" value="F:melanocortin receptor binding"/>
    <property type="evidence" value="ECO:0007669"/>
    <property type="project" value="TreeGrafter"/>
</dbReference>
<dbReference type="GO" id="GO:0005184">
    <property type="term" value="F:neuropeptide hormone activity"/>
    <property type="evidence" value="ECO:0007669"/>
    <property type="project" value="TreeGrafter"/>
</dbReference>
<dbReference type="GO" id="GO:0009755">
    <property type="term" value="P:hormone-mediated signaling pathway"/>
    <property type="evidence" value="ECO:0007669"/>
    <property type="project" value="InterPro"/>
</dbReference>
<dbReference type="GO" id="GO:0042438">
    <property type="term" value="P:melanin biosynthetic process"/>
    <property type="evidence" value="ECO:0000250"/>
    <property type="project" value="UniProtKB"/>
</dbReference>
<dbReference type="GO" id="GO:0032438">
    <property type="term" value="P:melanosome organization"/>
    <property type="evidence" value="ECO:0007669"/>
    <property type="project" value="TreeGrafter"/>
</dbReference>
<dbReference type="FunFam" id="4.10.760.10:FF:000002">
    <property type="entry name" value="Agouti-signaling protein"/>
    <property type="match status" value="1"/>
</dbReference>
<dbReference type="Gene3D" id="4.10.760.10">
    <property type="entry name" value="Agouti domain"/>
    <property type="match status" value="1"/>
</dbReference>
<dbReference type="InterPro" id="IPR007733">
    <property type="entry name" value="Agouti"/>
</dbReference>
<dbReference type="InterPro" id="IPR027300">
    <property type="entry name" value="Agouti_dom"/>
</dbReference>
<dbReference type="InterPro" id="IPR036836">
    <property type="entry name" value="Agouti_dom_sf"/>
</dbReference>
<dbReference type="PANTHER" id="PTHR16551">
    <property type="entry name" value="AGOUTI RELATED"/>
    <property type="match status" value="1"/>
</dbReference>
<dbReference type="PANTHER" id="PTHR16551:SF1">
    <property type="entry name" value="AGOUTI-SIGNALING PROTEIN"/>
    <property type="match status" value="1"/>
</dbReference>
<dbReference type="Pfam" id="PF05039">
    <property type="entry name" value="Agouti"/>
    <property type="match status" value="1"/>
</dbReference>
<dbReference type="SMART" id="SM00792">
    <property type="entry name" value="Agouti"/>
    <property type="match status" value="1"/>
</dbReference>
<dbReference type="SUPFAM" id="SSF57055">
    <property type="entry name" value="Agouti-related protein"/>
    <property type="match status" value="1"/>
</dbReference>
<dbReference type="PROSITE" id="PS60024">
    <property type="entry name" value="AGOUTI_1"/>
    <property type="match status" value="1"/>
</dbReference>
<dbReference type="PROSITE" id="PS51150">
    <property type="entry name" value="AGOUTI_2"/>
    <property type="match status" value="1"/>
</dbReference>
<name>ASIP_LEORO</name>
<accession>A1YL82</accession>
<proteinExistence type="inferred from homology"/>
<evidence type="ECO:0000250" key="1"/>
<evidence type="ECO:0000250" key="2">
    <source>
        <dbReference type="UniProtKB" id="P42127"/>
    </source>
</evidence>
<evidence type="ECO:0000250" key="3">
    <source>
        <dbReference type="UniProtKB" id="Q03288"/>
    </source>
</evidence>
<evidence type="ECO:0000255" key="4"/>
<evidence type="ECO:0000255" key="5">
    <source>
        <dbReference type="PROSITE-ProRule" id="PRU00494"/>
    </source>
</evidence>
<evidence type="ECO:0000256" key="6">
    <source>
        <dbReference type="SAM" id="MobiDB-lite"/>
    </source>
</evidence>
<protein>
    <recommendedName>
        <fullName>Agouti-signaling protein</fullName>
        <shortName>ASP</shortName>
    </recommendedName>
    <alternativeName>
        <fullName>Agouti switch protein</fullName>
    </alternativeName>
</protein>
<feature type="signal peptide" evidence="4">
    <location>
        <begin position="1"/>
        <end position="22"/>
    </location>
</feature>
<feature type="chain" id="PRO_0000285055" description="Agouti-signaling protein">
    <location>
        <begin position="23"/>
        <end position="132"/>
    </location>
</feature>
<feature type="domain" description="Agouti" evidence="5">
    <location>
        <begin position="93"/>
        <end position="132"/>
    </location>
</feature>
<feature type="region of interest" description="Disordered" evidence="6">
    <location>
        <begin position="62"/>
        <end position="93"/>
    </location>
</feature>
<feature type="compositionally biased region" description="Basic and acidic residues" evidence="6">
    <location>
        <begin position="64"/>
        <end position="79"/>
    </location>
</feature>
<feature type="glycosylation site" description="N-linked (GlcNAc...) asparagine" evidence="4">
    <location>
        <position position="39"/>
    </location>
</feature>
<feature type="disulfide bond" evidence="5">
    <location>
        <begin position="93"/>
        <end position="108"/>
    </location>
</feature>
<feature type="disulfide bond" evidence="5">
    <location>
        <begin position="100"/>
        <end position="114"/>
    </location>
</feature>
<feature type="disulfide bond" evidence="5">
    <location>
        <begin position="107"/>
        <end position="125"/>
    </location>
</feature>
<feature type="disulfide bond" evidence="5">
    <location>
        <begin position="111"/>
        <end position="132"/>
    </location>
</feature>
<feature type="disulfide bond" evidence="5">
    <location>
        <begin position="116"/>
        <end position="123"/>
    </location>
</feature>
<organism>
    <name type="scientific">Leontopithecus rosalia</name>
    <name type="common">Golden lion tamarin</name>
    <dbReference type="NCBI Taxonomy" id="30588"/>
    <lineage>
        <taxon>Eukaryota</taxon>
        <taxon>Metazoa</taxon>
        <taxon>Chordata</taxon>
        <taxon>Craniata</taxon>
        <taxon>Vertebrata</taxon>
        <taxon>Euteleostomi</taxon>
        <taxon>Mammalia</taxon>
        <taxon>Eutheria</taxon>
        <taxon>Euarchontoglires</taxon>
        <taxon>Primates</taxon>
        <taxon>Haplorrhini</taxon>
        <taxon>Platyrrhini</taxon>
        <taxon>Cebidae</taxon>
        <taxon>Callitrichinae</taxon>
        <taxon>Leontopithecus</taxon>
    </lineage>
</organism>
<keyword id="KW-1015">Disulfide bond</keyword>
<keyword id="KW-0325">Glycoprotein</keyword>
<keyword id="KW-0960">Knottin</keyword>
<keyword id="KW-0964">Secreted</keyword>
<keyword id="KW-0732">Signal</keyword>